<evidence type="ECO:0000255" key="1">
    <source>
        <dbReference type="HAMAP-Rule" id="MF_01454"/>
    </source>
</evidence>
<evidence type="ECO:0000255" key="2">
    <source>
        <dbReference type="PROSITE-ProRule" id="PRU01231"/>
    </source>
</evidence>
<evidence type="ECO:0000256" key="3">
    <source>
        <dbReference type="SAM" id="MobiDB-lite"/>
    </source>
</evidence>
<accession>Q7CW97</accession>
<sequence length="355" mass="38025">MKFLDEAKVYIKSGDGGAGAVSFRREKFIEFGGPDGGDGGRGGDVWVEVVNGLNTLIDFRFQQHFKASIGQHGMGKTRTGAKGSDVVLKVPVGTQIFEEDNETLIMDLTKEGQRFRLAAGGNGGFGNAYFKSSTNQAPTHANPGLAGEEKTIWLRLKLIADAGLVGLPNAGKSTFLATVTRARPKIANYPFTTLHPNLGVATIDGREFVLADIPGLIEGAHEGVGIGDRFLGHVERTRVLLHLVSAQEEKVGKAYKTVKAELDAYGGGLTDKPEIVALSQIDVLDEKELKKKAKELEKACGRPPLLLSAAAHIGMTEALRALRDIIVSASNGGDTALPDRSMPHESEVEEEDDRL</sequence>
<organism>
    <name type="scientific">Agrobacterium fabrum (strain C58 / ATCC 33970)</name>
    <name type="common">Agrobacterium tumefaciens (strain C58)</name>
    <dbReference type="NCBI Taxonomy" id="176299"/>
    <lineage>
        <taxon>Bacteria</taxon>
        <taxon>Pseudomonadati</taxon>
        <taxon>Pseudomonadota</taxon>
        <taxon>Alphaproteobacteria</taxon>
        <taxon>Hyphomicrobiales</taxon>
        <taxon>Rhizobiaceae</taxon>
        <taxon>Rhizobium/Agrobacterium group</taxon>
        <taxon>Agrobacterium</taxon>
        <taxon>Agrobacterium tumefaciens complex</taxon>
    </lineage>
</organism>
<keyword id="KW-0963">Cytoplasm</keyword>
<keyword id="KW-0342">GTP-binding</keyword>
<keyword id="KW-0378">Hydrolase</keyword>
<keyword id="KW-0460">Magnesium</keyword>
<keyword id="KW-0479">Metal-binding</keyword>
<keyword id="KW-0547">Nucleotide-binding</keyword>
<keyword id="KW-1185">Reference proteome</keyword>
<comment type="function">
    <text evidence="1">An essential GTPase which binds GTP, GDP and possibly (p)ppGpp with moderate affinity, with high nucleotide exchange rates and a fairly low GTP hydrolysis rate. Plays a role in control of the cell cycle, stress response, ribosome biogenesis and in those bacteria that undergo differentiation, in morphogenesis control.</text>
</comment>
<comment type="cofactor">
    <cofactor evidence="1">
        <name>Mg(2+)</name>
        <dbReference type="ChEBI" id="CHEBI:18420"/>
    </cofactor>
</comment>
<comment type="subunit">
    <text evidence="1">Monomer.</text>
</comment>
<comment type="subcellular location">
    <subcellularLocation>
        <location evidence="1">Cytoplasm</location>
    </subcellularLocation>
</comment>
<comment type="similarity">
    <text evidence="1">Belongs to the TRAFAC class OBG-HflX-like GTPase superfamily. OBG GTPase family.</text>
</comment>
<name>OBG_AGRFC</name>
<gene>
    <name evidence="1" type="primary">obg</name>
    <name type="ordered locus">Atu2781</name>
    <name type="ORF">AGR_C_5047</name>
</gene>
<dbReference type="EC" id="3.6.5.-" evidence="1"/>
<dbReference type="EMBL" id="AE007869">
    <property type="protein sequence ID" value="AAK88496.2"/>
    <property type="molecule type" value="Genomic_DNA"/>
</dbReference>
<dbReference type="RefSeq" id="NP_355711.2">
    <property type="nucleotide sequence ID" value="NC_003062.2"/>
</dbReference>
<dbReference type="RefSeq" id="WP_006310970.1">
    <property type="nucleotide sequence ID" value="NC_003062.2"/>
</dbReference>
<dbReference type="SMR" id="Q7CW97"/>
<dbReference type="STRING" id="176299.Atu2781"/>
<dbReference type="EnsemblBacteria" id="AAK88496">
    <property type="protein sequence ID" value="AAK88496"/>
    <property type="gene ID" value="Atu2781"/>
</dbReference>
<dbReference type="GeneID" id="1134819"/>
<dbReference type="KEGG" id="atu:Atu2781"/>
<dbReference type="PATRIC" id="fig|176299.10.peg.2791"/>
<dbReference type="eggNOG" id="COG0536">
    <property type="taxonomic scope" value="Bacteria"/>
</dbReference>
<dbReference type="HOGENOM" id="CLU_011747_2_0_5"/>
<dbReference type="OrthoDB" id="9807318at2"/>
<dbReference type="PhylomeDB" id="Q7CW97"/>
<dbReference type="BioCyc" id="AGRO:ATU2781-MONOMER"/>
<dbReference type="Proteomes" id="UP000000813">
    <property type="component" value="Chromosome circular"/>
</dbReference>
<dbReference type="GO" id="GO:0005737">
    <property type="term" value="C:cytoplasm"/>
    <property type="evidence" value="ECO:0007669"/>
    <property type="project" value="UniProtKB-SubCell"/>
</dbReference>
<dbReference type="GO" id="GO:0005525">
    <property type="term" value="F:GTP binding"/>
    <property type="evidence" value="ECO:0007669"/>
    <property type="project" value="UniProtKB-UniRule"/>
</dbReference>
<dbReference type="GO" id="GO:0003924">
    <property type="term" value="F:GTPase activity"/>
    <property type="evidence" value="ECO:0007669"/>
    <property type="project" value="UniProtKB-UniRule"/>
</dbReference>
<dbReference type="GO" id="GO:0000287">
    <property type="term" value="F:magnesium ion binding"/>
    <property type="evidence" value="ECO:0007669"/>
    <property type="project" value="InterPro"/>
</dbReference>
<dbReference type="GO" id="GO:0042254">
    <property type="term" value="P:ribosome biogenesis"/>
    <property type="evidence" value="ECO:0007669"/>
    <property type="project" value="UniProtKB-UniRule"/>
</dbReference>
<dbReference type="CDD" id="cd01898">
    <property type="entry name" value="Obg"/>
    <property type="match status" value="1"/>
</dbReference>
<dbReference type="FunFam" id="2.70.210.12:FF:000001">
    <property type="entry name" value="GTPase Obg"/>
    <property type="match status" value="1"/>
</dbReference>
<dbReference type="Gene3D" id="2.70.210.12">
    <property type="entry name" value="GTP1/OBG domain"/>
    <property type="match status" value="1"/>
</dbReference>
<dbReference type="Gene3D" id="3.40.50.300">
    <property type="entry name" value="P-loop containing nucleotide triphosphate hydrolases"/>
    <property type="match status" value="1"/>
</dbReference>
<dbReference type="HAMAP" id="MF_01454">
    <property type="entry name" value="GTPase_Obg"/>
    <property type="match status" value="1"/>
</dbReference>
<dbReference type="InterPro" id="IPR031167">
    <property type="entry name" value="G_OBG"/>
</dbReference>
<dbReference type="InterPro" id="IPR006073">
    <property type="entry name" value="GTP-bd"/>
</dbReference>
<dbReference type="InterPro" id="IPR014100">
    <property type="entry name" value="GTP-bd_Obg/CgtA"/>
</dbReference>
<dbReference type="InterPro" id="IPR006074">
    <property type="entry name" value="GTP1-OBG_CS"/>
</dbReference>
<dbReference type="InterPro" id="IPR006169">
    <property type="entry name" value="GTP1_OBG_dom"/>
</dbReference>
<dbReference type="InterPro" id="IPR036726">
    <property type="entry name" value="GTP1_OBG_dom_sf"/>
</dbReference>
<dbReference type="InterPro" id="IPR045086">
    <property type="entry name" value="OBG_GTPase"/>
</dbReference>
<dbReference type="InterPro" id="IPR027417">
    <property type="entry name" value="P-loop_NTPase"/>
</dbReference>
<dbReference type="NCBIfam" id="TIGR02729">
    <property type="entry name" value="Obg_CgtA"/>
    <property type="match status" value="1"/>
</dbReference>
<dbReference type="NCBIfam" id="NF008955">
    <property type="entry name" value="PRK12297.1"/>
    <property type="match status" value="1"/>
</dbReference>
<dbReference type="NCBIfam" id="NF008956">
    <property type="entry name" value="PRK12299.1"/>
    <property type="match status" value="1"/>
</dbReference>
<dbReference type="PANTHER" id="PTHR11702">
    <property type="entry name" value="DEVELOPMENTALLY REGULATED GTP-BINDING PROTEIN-RELATED"/>
    <property type="match status" value="1"/>
</dbReference>
<dbReference type="PANTHER" id="PTHR11702:SF31">
    <property type="entry name" value="MITOCHONDRIAL RIBOSOME-ASSOCIATED GTPASE 2"/>
    <property type="match status" value="1"/>
</dbReference>
<dbReference type="Pfam" id="PF01018">
    <property type="entry name" value="GTP1_OBG"/>
    <property type="match status" value="1"/>
</dbReference>
<dbReference type="Pfam" id="PF01926">
    <property type="entry name" value="MMR_HSR1"/>
    <property type="match status" value="1"/>
</dbReference>
<dbReference type="PIRSF" id="PIRSF002401">
    <property type="entry name" value="GTP_bd_Obg/CgtA"/>
    <property type="match status" value="1"/>
</dbReference>
<dbReference type="PRINTS" id="PR00326">
    <property type="entry name" value="GTP1OBG"/>
</dbReference>
<dbReference type="SUPFAM" id="SSF82051">
    <property type="entry name" value="Obg GTP-binding protein N-terminal domain"/>
    <property type="match status" value="1"/>
</dbReference>
<dbReference type="SUPFAM" id="SSF52540">
    <property type="entry name" value="P-loop containing nucleoside triphosphate hydrolases"/>
    <property type="match status" value="1"/>
</dbReference>
<dbReference type="PROSITE" id="PS51710">
    <property type="entry name" value="G_OBG"/>
    <property type="match status" value="1"/>
</dbReference>
<dbReference type="PROSITE" id="PS00905">
    <property type="entry name" value="GTP1_OBG"/>
    <property type="match status" value="1"/>
</dbReference>
<dbReference type="PROSITE" id="PS51883">
    <property type="entry name" value="OBG"/>
    <property type="match status" value="1"/>
</dbReference>
<reference key="1">
    <citation type="journal article" date="2001" name="Science">
        <title>Genome sequence of the plant pathogen and biotechnology agent Agrobacterium tumefaciens C58.</title>
        <authorList>
            <person name="Goodner B."/>
            <person name="Hinkle G."/>
            <person name="Gattung S."/>
            <person name="Miller N."/>
            <person name="Blanchard M."/>
            <person name="Qurollo B."/>
            <person name="Goldman B.S."/>
            <person name="Cao Y."/>
            <person name="Askenazi M."/>
            <person name="Halling C."/>
            <person name="Mullin L."/>
            <person name="Houmiel K."/>
            <person name="Gordon J."/>
            <person name="Vaudin M."/>
            <person name="Iartchouk O."/>
            <person name="Epp A."/>
            <person name="Liu F."/>
            <person name="Wollam C."/>
            <person name="Allinger M."/>
            <person name="Doughty D."/>
            <person name="Scott C."/>
            <person name="Lappas C."/>
            <person name="Markelz B."/>
            <person name="Flanagan C."/>
            <person name="Crowell C."/>
            <person name="Gurson J."/>
            <person name="Lomo C."/>
            <person name="Sear C."/>
            <person name="Strub G."/>
            <person name="Cielo C."/>
            <person name="Slater S."/>
        </authorList>
    </citation>
    <scope>NUCLEOTIDE SEQUENCE [LARGE SCALE GENOMIC DNA]</scope>
    <source>
        <strain>C58 / ATCC 33970</strain>
    </source>
</reference>
<reference key="2">
    <citation type="journal article" date="2001" name="Science">
        <title>The genome of the natural genetic engineer Agrobacterium tumefaciens C58.</title>
        <authorList>
            <person name="Wood D.W."/>
            <person name="Setubal J.C."/>
            <person name="Kaul R."/>
            <person name="Monks D.E."/>
            <person name="Kitajima J.P."/>
            <person name="Okura V.K."/>
            <person name="Zhou Y."/>
            <person name="Chen L."/>
            <person name="Wood G.E."/>
            <person name="Almeida N.F. Jr."/>
            <person name="Woo L."/>
            <person name="Chen Y."/>
            <person name="Paulsen I.T."/>
            <person name="Eisen J.A."/>
            <person name="Karp P.D."/>
            <person name="Bovee D. Sr."/>
            <person name="Chapman P."/>
            <person name="Clendenning J."/>
            <person name="Deatherage G."/>
            <person name="Gillet W."/>
            <person name="Grant C."/>
            <person name="Kutyavin T."/>
            <person name="Levy R."/>
            <person name="Li M.-J."/>
            <person name="McClelland E."/>
            <person name="Palmieri A."/>
            <person name="Raymond C."/>
            <person name="Rouse G."/>
            <person name="Saenphimmachak C."/>
            <person name="Wu Z."/>
            <person name="Romero P."/>
            <person name="Gordon D."/>
            <person name="Zhang S."/>
            <person name="Yoo H."/>
            <person name="Tao Y."/>
            <person name="Biddle P."/>
            <person name="Jung M."/>
            <person name="Krespan W."/>
            <person name="Perry M."/>
            <person name="Gordon-Kamm B."/>
            <person name="Liao L."/>
            <person name="Kim S."/>
            <person name="Hendrick C."/>
            <person name="Zhao Z.-Y."/>
            <person name="Dolan M."/>
            <person name="Chumley F."/>
            <person name="Tingey S.V."/>
            <person name="Tomb J.-F."/>
            <person name="Gordon M.P."/>
            <person name="Olson M.V."/>
            <person name="Nester E.W."/>
        </authorList>
    </citation>
    <scope>NUCLEOTIDE SEQUENCE [LARGE SCALE GENOMIC DNA]</scope>
    <source>
        <strain>C58 / ATCC 33970</strain>
    </source>
</reference>
<proteinExistence type="inferred from homology"/>
<feature type="chain" id="PRO_0000385679" description="GTPase Obg">
    <location>
        <begin position="1"/>
        <end position="355"/>
    </location>
</feature>
<feature type="domain" description="Obg" evidence="2">
    <location>
        <begin position="1"/>
        <end position="159"/>
    </location>
</feature>
<feature type="domain" description="OBG-type G" evidence="1">
    <location>
        <begin position="160"/>
        <end position="327"/>
    </location>
</feature>
<feature type="region of interest" description="Disordered" evidence="3">
    <location>
        <begin position="333"/>
        <end position="355"/>
    </location>
</feature>
<feature type="binding site" evidence="1">
    <location>
        <begin position="166"/>
        <end position="173"/>
    </location>
    <ligand>
        <name>GTP</name>
        <dbReference type="ChEBI" id="CHEBI:37565"/>
    </ligand>
</feature>
<feature type="binding site" evidence="1">
    <location>
        <position position="173"/>
    </location>
    <ligand>
        <name>Mg(2+)</name>
        <dbReference type="ChEBI" id="CHEBI:18420"/>
    </ligand>
</feature>
<feature type="binding site" evidence="1">
    <location>
        <begin position="191"/>
        <end position="195"/>
    </location>
    <ligand>
        <name>GTP</name>
        <dbReference type="ChEBI" id="CHEBI:37565"/>
    </ligand>
</feature>
<feature type="binding site" evidence="1">
    <location>
        <position position="193"/>
    </location>
    <ligand>
        <name>Mg(2+)</name>
        <dbReference type="ChEBI" id="CHEBI:18420"/>
    </ligand>
</feature>
<feature type="binding site" evidence="1">
    <location>
        <begin position="212"/>
        <end position="215"/>
    </location>
    <ligand>
        <name>GTP</name>
        <dbReference type="ChEBI" id="CHEBI:37565"/>
    </ligand>
</feature>
<feature type="binding site" evidence="1">
    <location>
        <begin position="279"/>
        <end position="282"/>
    </location>
    <ligand>
        <name>GTP</name>
        <dbReference type="ChEBI" id="CHEBI:37565"/>
    </ligand>
</feature>
<feature type="binding site" evidence="1">
    <location>
        <begin position="308"/>
        <end position="310"/>
    </location>
    <ligand>
        <name>GTP</name>
        <dbReference type="ChEBI" id="CHEBI:37565"/>
    </ligand>
</feature>
<protein>
    <recommendedName>
        <fullName evidence="1">GTPase Obg</fullName>
        <ecNumber evidence="1">3.6.5.-</ecNumber>
    </recommendedName>
    <alternativeName>
        <fullName evidence="1">GTP-binding protein Obg</fullName>
    </alternativeName>
</protein>